<organism>
    <name type="scientific">Caenorhabditis elegans</name>
    <dbReference type="NCBI Taxonomy" id="6239"/>
    <lineage>
        <taxon>Eukaryota</taxon>
        <taxon>Metazoa</taxon>
        <taxon>Ecdysozoa</taxon>
        <taxon>Nematoda</taxon>
        <taxon>Chromadorea</taxon>
        <taxon>Rhabditida</taxon>
        <taxon>Rhabditina</taxon>
        <taxon>Rhabditomorpha</taxon>
        <taxon>Rhabditoidea</taxon>
        <taxon>Rhabditidae</taxon>
        <taxon>Peloderinae</taxon>
        <taxon>Caenorhabditis</taxon>
    </lineage>
</organism>
<proteinExistence type="evidence at protein level"/>
<sequence length="333" mass="37792">MDVEKLNLDNIISRLLEVRGSKPGKNVQLTESEIKGLCQKSREIFLSQPILLELEAPLKICGDVHGQYYDLLRLFEYGGFPPESNYLFLGDYVDRGKQSLETICLLLAYKIKYPENFFLLRGNHECASINRIYGFYDECKRRYNIKLWKTFTDCFNCLPVAAIIDEKIFCCHGGLSPDLQSMEQIRRIMRPTDVPDQGLLCDLLWSDPDKDVTGWGENDRGVSFTFGPEVVAKFLHKHDLDLICRAHQVVEDGYEFFAKRQLVTLFSAPNYCGEFDNAGSMMTVDETLMCSFQILKPADKKKYPYGAGGVGSNRPVTPPRNAPAAQPKKGAKK</sequence>
<name>GLC7B_CAEEL</name>
<comment type="function">
    <text evidence="4 5 6 7 8 9 12 14">Serine/threonine-protein phosphatase essential for chromosomal dynamics during meiosis and mitosis. During meiosis, promotes chromosomal cohesion and germline immortality via a small RNA-mediated genome silencing pathway (PubMed:30921322). Antagonizes the function of air-2 kinase during meiosis I and mitosis to promote chromatid cohesion and spindle attachment (PubMed:18923084). Dephosphorylates histone H3 at 'Ser-10' (Probable). Dephosphorylates histone H3 at 'Thr-3' (Probable). Also involved in the activation of chloride channel clh-3 during cell swelling and meiotic maturation. Promotes small RNA-mediated genome silencing over multiple generations (PubMed:30921322). Essential for embryogenesis.</text>
</comment>
<comment type="catalytic activity">
    <reaction evidence="14">
        <text>O-phospho-L-seryl-[protein] + H2O = L-seryl-[protein] + phosphate</text>
        <dbReference type="Rhea" id="RHEA:20629"/>
        <dbReference type="Rhea" id="RHEA-COMP:9863"/>
        <dbReference type="Rhea" id="RHEA-COMP:11604"/>
        <dbReference type="ChEBI" id="CHEBI:15377"/>
        <dbReference type="ChEBI" id="CHEBI:29999"/>
        <dbReference type="ChEBI" id="CHEBI:43474"/>
        <dbReference type="ChEBI" id="CHEBI:83421"/>
        <dbReference type="EC" id="3.1.3.16"/>
    </reaction>
</comment>
<comment type="catalytic activity">
    <reaction evidence="14">
        <text>O-phospho-L-threonyl-[protein] + H2O = L-threonyl-[protein] + phosphate</text>
        <dbReference type="Rhea" id="RHEA:47004"/>
        <dbReference type="Rhea" id="RHEA-COMP:11060"/>
        <dbReference type="Rhea" id="RHEA-COMP:11605"/>
        <dbReference type="ChEBI" id="CHEBI:15377"/>
        <dbReference type="ChEBI" id="CHEBI:30013"/>
        <dbReference type="ChEBI" id="CHEBI:43474"/>
        <dbReference type="ChEBI" id="CHEBI:61977"/>
        <dbReference type="EC" id="3.1.3.16"/>
    </reaction>
</comment>
<comment type="cofactor">
    <cofactor evidence="2">
        <name>Mn(2+)</name>
        <dbReference type="ChEBI" id="CHEBI:29035"/>
    </cofactor>
    <text evidence="2">Binds 2 manganese ions per subunit.</text>
</comment>
<comment type="activity regulation">
    <text evidence="7">Inhibited by okadaic acid.</text>
</comment>
<comment type="subunit">
    <text evidence="10 11">Interacts with lab-1; the interaction is direct (PubMed:22927794). Interacts with knl-1; the interaction is direct (PubMed:22331849).</text>
</comment>
<comment type="interaction">
    <interactant intactId="EBI-2418500">
        <id>P48727</id>
    </interactant>
    <interactant intactId="EBI-16011794">
        <id>Q17604</id>
        <label>lab-1</label>
    </interactant>
    <organismsDiffer>false</organismsDiffer>
    <experiments>2</experiments>
</comment>
<comment type="subcellular location">
    <subcellularLocation>
        <location evidence="7">Cytoplasm</location>
    </subcellularLocation>
    <subcellularLocation>
        <location evidence="7 12">Nucleus</location>
    </subcellularLocation>
    <text evidence="12">Localizes to nuclei in the mid-pachytene to diplotene phase of meiosis.</text>
</comment>
<comment type="tissue specificity">
    <text evidence="7">Expressed in gonads, nervous system, intestine and muscles.</text>
</comment>
<comment type="developmental stage">
    <text evidence="7">Expressed at early embryonic stages.</text>
</comment>
<comment type="similarity">
    <text evidence="13">Belongs to the PPP phosphatase family. PP-1 subfamily.</text>
</comment>
<gene>
    <name evidence="15" type="primary">gsp-2</name>
    <name evidence="15" type="synonym">Ce-glc-7beta</name>
    <name evidence="15" type="synonym">CeGLC-7beta</name>
    <name evidence="15" type="synonym">glc-7</name>
    <name evidence="15" type="ORF">F56C9.1</name>
</gene>
<dbReference type="EC" id="3.1.3.16" evidence="14"/>
<dbReference type="EMBL" id="BX284603">
    <property type="protein sequence ID" value="CCD61828.1"/>
    <property type="molecule type" value="Genomic_DNA"/>
</dbReference>
<dbReference type="PIR" id="T16476">
    <property type="entry name" value="T16476"/>
</dbReference>
<dbReference type="RefSeq" id="NP_001022616.1">
    <property type="nucleotide sequence ID" value="NM_001027445.7"/>
</dbReference>
<dbReference type="SMR" id="P48727"/>
<dbReference type="BioGRID" id="532125">
    <property type="interactions" value="31"/>
</dbReference>
<dbReference type="DIP" id="DIP-25119N"/>
<dbReference type="FunCoup" id="P48727">
    <property type="interactions" value="3062"/>
</dbReference>
<dbReference type="IntAct" id="P48727">
    <property type="interactions" value="4"/>
</dbReference>
<dbReference type="STRING" id="6239.F56C9.1.1"/>
<dbReference type="PaxDb" id="6239-F56C9.1"/>
<dbReference type="PeptideAtlas" id="P48727"/>
<dbReference type="EnsemblMetazoa" id="F56C9.1.1">
    <property type="protein sequence ID" value="F56C9.1.1"/>
    <property type="gene ID" value="WBGene00001748"/>
</dbReference>
<dbReference type="GeneID" id="3564807"/>
<dbReference type="KEGG" id="cel:CELE_F56C9.1"/>
<dbReference type="UCSC" id="F56C9.1">
    <property type="organism name" value="c. elegans"/>
</dbReference>
<dbReference type="AGR" id="WB:WBGene00001748"/>
<dbReference type="CTD" id="3564807"/>
<dbReference type="WormBase" id="F56C9.1">
    <property type="protein sequence ID" value="CE01319"/>
    <property type="gene ID" value="WBGene00001748"/>
    <property type="gene designation" value="gsp-2"/>
</dbReference>
<dbReference type="eggNOG" id="KOG0374">
    <property type="taxonomic scope" value="Eukaryota"/>
</dbReference>
<dbReference type="GeneTree" id="ENSGT00940000169490"/>
<dbReference type="HOGENOM" id="CLU_004962_0_0_1"/>
<dbReference type="InParanoid" id="P48727"/>
<dbReference type="OMA" id="RNIARPM"/>
<dbReference type="OrthoDB" id="1930084at2759"/>
<dbReference type="PhylomeDB" id="P48727"/>
<dbReference type="PRO" id="PR:P48727"/>
<dbReference type="Proteomes" id="UP000001940">
    <property type="component" value="Chromosome III"/>
</dbReference>
<dbReference type="GO" id="GO:0005694">
    <property type="term" value="C:chromosome"/>
    <property type="evidence" value="ECO:0000314"/>
    <property type="project" value="WormBase"/>
</dbReference>
<dbReference type="GO" id="GO:0005737">
    <property type="term" value="C:cytoplasm"/>
    <property type="evidence" value="ECO:0000314"/>
    <property type="project" value="WormBase"/>
</dbReference>
<dbReference type="GO" id="GO:0031965">
    <property type="term" value="C:nuclear membrane"/>
    <property type="evidence" value="ECO:0000314"/>
    <property type="project" value="WormBase"/>
</dbReference>
<dbReference type="GO" id="GO:0005634">
    <property type="term" value="C:nucleus"/>
    <property type="evidence" value="ECO:0000314"/>
    <property type="project" value="WormBase"/>
</dbReference>
<dbReference type="GO" id="GO:0046872">
    <property type="term" value="F:metal ion binding"/>
    <property type="evidence" value="ECO:0007669"/>
    <property type="project" value="UniProtKB-KW"/>
</dbReference>
<dbReference type="GO" id="GO:0004722">
    <property type="term" value="F:protein serine/threonine phosphatase activity"/>
    <property type="evidence" value="ECO:0000314"/>
    <property type="project" value="WormBase"/>
</dbReference>
<dbReference type="GO" id="GO:0051301">
    <property type="term" value="P:cell division"/>
    <property type="evidence" value="ECO:0007669"/>
    <property type="project" value="UniProtKB-KW"/>
</dbReference>
<dbReference type="GO" id="GO:0006325">
    <property type="term" value="P:chromatin organization"/>
    <property type="evidence" value="ECO:0007669"/>
    <property type="project" value="UniProtKB-KW"/>
</dbReference>
<dbReference type="GO" id="GO:0051321">
    <property type="term" value="P:meiotic cell cycle"/>
    <property type="evidence" value="ECO:0007669"/>
    <property type="project" value="UniProtKB-KW"/>
</dbReference>
<dbReference type="CDD" id="cd07414">
    <property type="entry name" value="MPP_PP1_PPKL"/>
    <property type="match status" value="1"/>
</dbReference>
<dbReference type="FunFam" id="3.60.21.10:FF:000004">
    <property type="entry name" value="Serine/threonine-protein phosphatase"/>
    <property type="match status" value="1"/>
</dbReference>
<dbReference type="Gene3D" id="3.60.21.10">
    <property type="match status" value="1"/>
</dbReference>
<dbReference type="InterPro" id="IPR004843">
    <property type="entry name" value="Calcineurin-like_PHP_ApaH"/>
</dbReference>
<dbReference type="InterPro" id="IPR029052">
    <property type="entry name" value="Metallo-depent_PP-like"/>
</dbReference>
<dbReference type="InterPro" id="IPR050341">
    <property type="entry name" value="PP1_catalytic_subunit"/>
</dbReference>
<dbReference type="InterPro" id="IPR006186">
    <property type="entry name" value="Ser/Thr-sp_prot-phosphatase"/>
</dbReference>
<dbReference type="InterPro" id="IPR031675">
    <property type="entry name" value="STPPase_N"/>
</dbReference>
<dbReference type="PANTHER" id="PTHR11668">
    <property type="entry name" value="SERINE/THREONINE PROTEIN PHOSPHATASE"/>
    <property type="match status" value="1"/>
</dbReference>
<dbReference type="PANTHER" id="PTHR11668:SF300">
    <property type="entry name" value="SERINE_THREONINE-PROTEIN PHOSPHATASE"/>
    <property type="match status" value="1"/>
</dbReference>
<dbReference type="Pfam" id="PF00149">
    <property type="entry name" value="Metallophos"/>
    <property type="match status" value="1"/>
</dbReference>
<dbReference type="Pfam" id="PF16891">
    <property type="entry name" value="STPPase_N"/>
    <property type="match status" value="1"/>
</dbReference>
<dbReference type="PRINTS" id="PR00114">
    <property type="entry name" value="STPHPHTASE"/>
</dbReference>
<dbReference type="SMART" id="SM00156">
    <property type="entry name" value="PP2Ac"/>
    <property type="match status" value="1"/>
</dbReference>
<dbReference type="SUPFAM" id="SSF56300">
    <property type="entry name" value="Metallo-dependent phosphatases"/>
    <property type="match status" value="1"/>
</dbReference>
<dbReference type="PROSITE" id="PS00125">
    <property type="entry name" value="SER_THR_PHOSPHATASE"/>
    <property type="match status" value="1"/>
</dbReference>
<protein>
    <recommendedName>
        <fullName>Serine/threonine-protein phosphatase PP1-beta</fullName>
        <ecNumber evidence="14">3.1.3.16</ecNumber>
    </recommendedName>
    <alternativeName>
        <fullName>CeGLC-7-beta</fullName>
    </alternativeName>
    <alternativeName>
        <fullName>Glc seven-like phosphatase 2</fullName>
    </alternativeName>
</protein>
<reference key="1">
    <citation type="journal article" date="1998" name="Science">
        <title>Genome sequence of the nematode C. elegans: a platform for investigating biology.</title>
        <authorList>
            <consortium name="The C. elegans sequencing consortium"/>
        </authorList>
    </citation>
    <scope>NUCLEOTIDE SEQUENCE [LARGE SCALE GENOMIC DNA]</scope>
    <source>
        <strain>Bristol N2</strain>
    </source>
</reference>
<reference key="2">
    <citation type="journal article" date="2000" name="Cell">
        <title>Mitotic phosphorylation of histone H3 is governed by Ipl1/aurora kinase and Glc7/PP1 phosphatase in budding yeast and nematodes.</title>
        <authorList>
            <person name="Hsu J.-Y."/>
            <person name="Sun Z.-W."/>
            <person name="Li X."/>
            <person name="Reuben M."/>
            <person name="Tatchell K."/>
            <person name="Bishop D.K."/>
            <person name="Grushcow J.M."/>
            <person name="Brame C.J."/>
            <person name="Caldwell J.A."/>
            <person name="Hunt D.F."/>
            <person name="Lin R."/>
            <person name="Smith M.M."/>
            <person name="Allis C.D."/>
        </authorList>
    </citation>
    <scope>FUNCTION</scope>
</reference>
<reference key="3">
    <citation type="journal article" date="2002" name="J. Cell Biol.">
        <title>The aurora kinase AIR-2 functions in the release of chromosome cohesion in Caenorhabditis elegans meiosis.</title>
        <authorList>
            <person name="Rogers E."/>
            <person name="Bishop J.D."/>
            <person name="Waddle J.A."/>
            <person name="Schumacher J.M."/>
            <person name="Lin R."/>
        </authorList>
    </citation>
    <scope>FUNCTION</scope>
</reference>
<reference key="4">
    <citation type="journal article" date="2002" name="J. Cell Biol.">
        <title>Cell cycle- and swelling-induced activation of a Caenorhabditis elegans ClC channel is mediated by CeGLC-7alpha/beta phosphatases.</title>
        <authorList>
            <person name="Rutledge E."/>
            <person name="Denton J."/>
            <person name="Strange K."/>
        </authorList>
    </citation>
    <scope>FUNCTION</scope>
</reference>
<reference key="5">
    <citation type="journal article" date="2003" name="Exp. Cell Res.">
        <title>Role of Caenorhabditis elegans protein phosphatase type 1, CeGLC-7 beta, in metaphase to anaphase transition during embryonic development.</title>
        <authorList>
            <person name="Sassa T."/>
            <person name="Ueda-Ohba H."/>
            <person name="Kitamura K."/>
            <person name="Harada S."/>
            <person name="Hosono R."/>
        </authorList>
    </citation>
    <scope>FUNCTION</scope>
    <scope>ACTIVITY REGULATION</scope>
    <scope>TISSUE SPECIFICITY</scope>
    <scope>DEVELOPMENTAL STAGE</scope>
    <scope>SUBCELLULAR LOCATION</scope>
</reference>
<reference key="6">
    <citation type="journal article" date="2003" name="Genes Cells">
        <title>Caenorhabditis elegans RBX1 is essential for meiosis, mitotic chromosomal condensation and segregation, and cytokinesis.</title>
        <authorList>
            <person name="Sasagawa Y."/>
            <person name="Urano T."/>
            <person name="Kohara Y."/>
            <person name="Takahashi H."/>
            <person name="Higashitani A."/>
        </authorList>
    </citation>
    <scope>FUNCTION</scope>
</reference>
<reference key="7">
    <citation type="journal article" date="2008" name="Genes Dev.">
        <title>LAB-1 antagonizes the Aurora B kinase in C. elegans.</title>
        <authorList>
            <person name="de Carvalho C.E."/>
            <person name="Zaaijer S."/>
            <person name="Smolikov S."/>
            <person name="Gu Y."/>
            <person name="Schumacher J.M."/>
            <person name="Colaiacovo M.P."/>
        </authorList>
    </citation>
    <scope>FUNCTION</scope>
</reference>
<reference key="8">
    <citation type="journal article" date="2012" name="PLoS Biol.">
        <title>LAB-1 targets PP1 and restricts Aurora B kinase upon entrance into meiosis to promote sister chromatid cohesion.</title>
        <authorList>
            <person name="Tzur Y.B."/>
            <person name="Egydio de Carvalho C."/>
            <person name="Nadarajan S."/>
            <person name="Van Bostelen I."/>
            <person name="Gu Y."/>
            <person name="Chu D.S."/>
            <person name="Cheeseman I.M."/>
            <person name="Colaiacovo M.P."/>
        </authorList>
    </citation>
    <scope>INTERACTION WITH LAB-1</scope>
</reference>
<reference key="9">
    <citation type="journal article" date="2012" name="J. Cell Biol.">
        <title>Microtubule binding by KNL-1 contributes to spindle checkpoint silencing at the kinetochore.</title>
        <authorList>
            <person name="Espeut J."/>
            <person name="Cheerambathur D.K."/>
            <person name="Krenning L."/>
            <person name="Oegema K."/>
            <person name="Desai A."/>
        </authorList>
    </citation>
    <scope>INTERACTION WITH KNL-1</scope>
</reference>
<reference key="10">
    <citation type="journal article" date="2019" name="PLoS Genet.">
        <title>The meiotic phosphatase GSP-2/PP1 promotes germline immortality and small RNA-mediated genome silencing.</title>
        <authorList>
            <person name="Billmyre K.K."/>
            <person name="Doebley A.L."/>
            <person name="Spichal M."/>
            <person name="Heestand B."/>
            <person name="Belicard T."/>
            <person name="Sato-Carlton A."/>
            <person name="Flibotte S."/>
            <person name="Simon M."/>
            <person name="Gnazzo M."/>
            <person name="Skop A."/>
            <person name="Moerman D."/>
            <person name="Carlton P.M."/>
            <person name="Sarkies P."/>
            <person name="Ahmed S."/>
        </authorList>
    </citation>
    <scope>FUNCTION</scope>
    <scope>CATALYTIC ACTIVITY</scope>
    <scope>SUBCELLULAR LOCATION</scope>
    <scope>MUTAGENESIS OF ASP-252</scope>
</reference>
<evidence type="ECO:0000250" key="1">
    <source>
        <dbReference type="UniProtKB" id="P36873"/>
    </source>
</evidence>
<evidence type="ECO:0000250" key="2">
    <source>
        <dbReference type="UniProtKB" id="P62136"/>
    </source>
</evidence>
<evidence type="ECO:0000256" key="3">
    <source>
        <dbReference type="SAM" id="MobiDB-lite"/>
    </source>
</evidence>
<evidence type="ECO:0000269" key="4">
    <source>
    </source>
</evidence>
<evidence type="ECO:0000269" key="5">
    <source>
    </source>
</evidence>
<evidence type="ECO:0000269" key="6">
    <source>
    </source>
</evidence>
<evidence type="ECO:0000269" key="7">
    <source>
    </source>
</evidence>
<evidence type="ECO:0000269" key="8">
    <source>
    </source>
</evidence>
<evidence type="ECO:0000269" key="9">
    <source>
    </source>
</evidence>
<evidence type="ECO:0000269" key="10">
    <source>
    </source>
</evidence>
<evidence type="ECO:0000269" key="11">
    <source>
    </source>
</evidence>
<evidence type="ECO:0000269" key="12">
    <source>
    </source>
</evidence>
<evidence type="ECO:0000305" key="13"/>
<evidence type="ECO:0000305" key="14">
    <source>
    </source>
</evidence>
<evidence type="ECO:0000312" key="15">
    <source>
        <dbReference type="WormBase" id="F56C9.1"/>
    </source>
</evidence>
<keyword id="KW-0131">Cell cycle</keyword>
<keyword id="KW-0132">Cell division</keyword>
<keyword id="KW-0156">Chromatin regulator</keyword>
<keyword id="KW-0963">Cytoplasm</keyword>
<keyword id="KW-0217">Developmental protein</keyword>
<keyword id="KW-0378">Hydrolase</keyword>
<keyword id="KW-0464">Manganese</keyword>
<keyword id="KW-0469">Meiosis</keyword>
<keyword id="KW-0479">Metal-binding</keyword>
<keyword id="KW-0498">Mitosis</keyword>
<keyword id="KW-0539">Nucleus</keyword>
<keyword id="KW-0904">Protein phosphatase</keyword>
<keyword id="KW-1185">Reference proteome</keyword>
<feature type="chain" id="PRO_0000058913" description="Serine/threonine-protein phosphatase PP1-beta">
    <location>
        <begin position="1"/>
        <end position="333"/>
    </location>
</feature>
<feature type="region of interest" description="Disordered" evidence="3">
    <location>
        <begin position="306"/>
        <end position="333"/>
    </location>
</feature>
<feature type="compositionally biased region" description="Low complexity" evidence="3">
    <location>
        <begin position="322"/>
        <end position="333"/>
    </location>
</feature>
<feature type="active site" description="Proton donor" evidence="1">
    <location>
        <position position="124"/>
    </location>
</feature>
<feature type="binding site" evidence="2">
    <location>
        <position position="63"/>
    </location>
    <ligand>
        <name>Mn(2+)</name>
        <dbReference type="ChEBI" id="CHEBI:29035"/>
        <label>1</label>
    </ligand>
</feature>
<feature type="binding site" evidence="2">
    <location>
        <position position="63"/>
    </location>
    <ligand>
        <name>Mn(2+)</name>
        <dbReference type="ChEBI" id="CHEBI:29035"/>
        <label>2</label>
    </ligand>
</feature>
<feature type="binding site" evidence="2">
    <location>
        <position position="65"/>
    </location>
    <ligand>
        <name>Mn(2+)</name>
        <dbReference type="ChEBI" id="CHEBI:29035"/>
        <label>1</label>
    </ligand>
</feature>
<feature type="binding site" evidence="2">
    <location>
        <position position="91"/>
    </location>
    <ligand>
        <name>Mn(2+)</name>
        <dbReference type="ChEBI" id="CHEBI:29035"/>
        <label>1</label>
    </ligand>
</feature>
<feature type="binding site" evidence="2">
    <location>
        <position position="91"/>
    </location>
    <ligand>
        <name>Mn(2+)</name>
        <dbReference type="ChEBI" id="CHEBI:29035"/>
        <label>2</label>
    </ligand>
</feature>
<feature type="binding site" evidence="2">
    <location>
        <position position="123"/>
    </location>
    <ligand>
        <name>Mn(2+)</name>
        <dbReference type="ChEBI" id="CHEBI:29035"/>
        <label>2</label>
    </ligand>
</feature>
<feature type="binding site" evidence="2">
    <location>
        <position position="172"/>
    </location>
    <ligand>
        <name>Mn(2+)</name>
        <dbReference type="ChEBI" id="CHEBI:29035"/>
        <label>2</label>
    </ligand>
</feature>
<feature type="binding site" evidence="2">
    <location>
        <position position="247"/>
    </location>
    <ligand>
        <name>Mn(2+)</name>
        <dbReference type="ChEBI" id="CHEBI:29035"/>
        <label>2</label>
    </ligand>
</feature>
<feature type="mutagenesis site" description="In yp14; temperature-sensitive. Embryonic lethality in 6% of animals at 20 degrees Celsius and in 41.6% of animals at 25 degrees Celsius. Fertile at 20 degrees Celsius, but sterile at 25 Degrees Celsius. In sterile mutants at 25 degrees Celsius, 40% of oocytes contain unpaired chromosomes. Defective germ cell immortality at 20 degrees Celsius, which is more prominent at 25 degrees Celsius. The germ cell immortality defect is due to an X chromosome segregation defect, which results in a high proportion of male progeny (Him phenotype). Disrupted inheritance of small RNA-mediated genome silencing over multiple generations. Decreased levels of total 22G RNAs and miRNAs. Increased phosphorylation of histone H3 at 'Ser-10' and 'Thr-3' in oocytes at 25 degrees Celsius. Reduced di- and trimethylation of 'Lys-9' of histone H3 in the diakinesis phase of prophase I in meiotic oocytes at 25 degrees Celsius. Double knockout with the lab-1 tm1791, hrde-1 tm1200 or rsd-6 yp11 mutant increases the incidence of sterility at 25 degrees Celsius as compared to the single mutants." evidence="12">
    <original>D</original>
    <variation>N</variation>
    <location>
        <position position="252"/>
    </location>
</feature>
<accession>P48727</accession>